<name>SLYX_ECOSE</name>
<reference key="1">
    <citation type="journal article" date="2008" name="DNA Res.">
        <title>Complete genome sequence and comparative analysis of the wild-type commensal Escherichia coli strain SE11 isolated from a healthy adult.</title>
        <authorList>
            <person name="Oshima K."/>
            <person name="Toh H."/>
            <person name="Ogura Y."/>
            <person name="Sasamoto H."/>
            <person name="Morita H."/>
            <person name="Park S.-H."/>
            <person name="Ooka T."/>
            <person name="Iyoda S."/>
            <person name="Taylor T.D."/>
            <person name="Hayashi T."/>
            <person name="Itoh K."/>
            <person name="Hattori M."/>
        </authorList>
    </citation>
    <scope>NUCLEOTIDE SEQUENCE [LARGE SCALE GENOMIC DNA]</scope>
    <source>
        <strain>SE11</strain>
    </source>
</reference>
<comment type="similarity">
    <text evidence="1">Belongs to the SlyX family.</text>
</comment>
<evidence type="ECO:0000255" key="1">
    <source>
        <dbReference type="HAMAP-Rule" id="MF_00715"/>
    </source>
</evidence>
<evidence type="ECO:0000256" key="2">
    <source>
        <dbReference type="SAM" id="MobiDB-lite"/>
    </source>
</evidence>
<protein>
    <recommendedName>
        <fullName evidence="1">Protein SlyX</fullName>
    </recommendedName>
</protein>
<accession>B6I248</accession>
<proteinExistence type="inferred from homology"/>
<dbReference type="EMBL" id="AP009240">
    <property type="protein sequence ID" value="BAG79133.1"/>
    <property type="molecule type" value="Genomic_DNA"/>
</dbReference>
<dbReference type="RefSeq" id="WP_001153615.1">
    <property type="nucleotide sequence ID" value="NC_011415.1"/>
</dbReference>
<dbReference type="SMR" id="B6I248"/>
<dbReference type="KEGG" id="ecy:ECSE_3609"/>
<dbReference type="HOGENOM" id="CLU_180796_4_2_6"/>
<dbReference type="Proteomes" id="UP000008199">
    <property type="component" value="Chromosome"/>
</dbReference>
<dbReference type="Gene3D" id="1.20.5.300">
    <property type="match status" value="1"/>
</dbReference>
<dbReference type="HAMAP" id="MF_00715">
    <property type="entry name" value="SlyX"/>
    <property type="match status" value="1"/>
</dbReference>
<dbReference type="InterPro" id="IPR007236">
    <property type="entry name" value="SlyX"/>
</dbReference>
<dbReference type="NCBIfam" id="NF002750">
    <property type="entry name" value="PRK02793.1"/>
    <property type="match status" value="1"/>
</dbReference>
<dbReference type="PANTHER" id="PTHR36508">
    <property type="entry name" value="PROTEIN SLYX"/>
    <property type="match status" value="1"/>
</dbReference>
<dbReference type="PANTHER" id="PTHR36508:SF1">
    <property type="entry name" value="PROTEIN SLYX"/>
    <property type="match status" value="1"/>
</dbReference>
<dbReference type="Pfam" id="PF04102">
    <property type="entry name" value="SlyX"/>
    <property type="match status" value="1"/>
</dbReference>
<organism>
    <name type="scientific">Escherichia coli (strain SE11)</name>
    <dbReference type="NCBI Taxonomy" id="409438"/>
    <lineage>
        <taxon>Bacteria</taxon>
        <taxon>Pseudomonadati</taxon>
        <taxon>Pseudomonadota</taxon>
        <taxon>Gammaproteobacteria</taxon>
        <taxon>Enterobacterales</taxon>
        <taxon>Enterobacteriaceae</taxon>
        <taxon>Escherichia</taxon>
    </lineage>
</organism>
<sequence length="72" mass="8214">MQDLSLEARLAELESRLAFQEITIEELNVTVTAHEMEMAKLRDHLRLLTEKLKASQPSNIASQAEETPPPHY</sequence>
<gene>
    <name evidence="1" type="primary">slyX</name>
    <name type="ordered locus">ECSE_3609</name>
</gene>
<feature type="chain" id="PRO_1000195833" description="Protein SlyX">
    <location>
        <begin position="1"/>
        <end position="72"/>
    </location>
</feature>
<feature type="region of interest" description="Disordered" evidence="2">
    <location>
        <begin position="52"/>
        <end position="72"/>
    </location>
</feature>
<feature type="compositionally biased region" description="Polar residues" evidence="2">
    <location>
        <begin position="55"/>
        <end position="65"/>
    </location>
</feature>